<keyword id="KW-0025">Alternative splicing</keyword>
<keyword id="KW-0238">DNA-binding</keyword>
<keyword id="KW-0539">Nucleus</keyword>
<keyword id="KW-1185">Reference proteome</keyword>
<keyword id="KW-0804">Transcription</keyword>
<keyword id="KW-0805">Transcription regulation</keyword>
<feature type="chain" id="PRO_0000358798" description="Transcription factor bHLH112">
    <location>
        <begin position="1"/>
        <end position="393"/>
    </location>
</feature>
<feature type="domain" description="bHLH" evidence="1">
    <location>
        <begin position="270"/>
        <end position="319"/>
    </location>
</feature>
<feature type="region of interest" description="Disordered" evidence="2">
    <location>
        <begin position="248"/>
        <end position="277"/>
    </location>
</feature>
<feature type="region of interest" description="Disordered" evidence="2">
    <location>
        <begin position="332"/>
        <end position="356"/>
    </location>
</feature>
<feature type="compositionally biased region" description="Basic and acidic residues" evidence="2">
    <location>
        <begin position="254"/>
        <end position="265"/>
    </location>
</feature>
<feature type="compositionally biased region" description="Low complexity" evidence="2">
    <location>
        <begin position="332"/>
        <end position="347"/>
    </location>
</feature>
<feature type="splice variant" id="VSP_036101" description="In isoform 2." evidence="3">
    <original>ISGKS</original>
    <variation>VQYTI</variation>
    <location>
        <begin position="343"/>
        <end position="347"/>
    </location>
</feature>
<feature type="splice variant" id="VSP_036102" description="In isoform 2." evidence="3">
    <location>
        <begin position="348"/>
        <end position="393"/>
    </location>
</feature>
<feature type="sequence conflict" description="In Ref. 4; AAM62823." evidence="4" ref="4">
    <original>G</original>
    <variation>S</variation>
    <location>
        <position position="17"/>
    </location>
</feature>
<gene>
    <name type="primary">BHLH112</name>
    <name type="synonym">EN64</name>
    <name type="ordered locus">At1g61660</name>
    <name type="ORF">T13M11.1</name>
</gene>
<protein>
    <recommendedName>
        <fullName>Transcription factor bHLH112</fullName>
    </recommendedName>
    <alternativeName>
        <fullName>Basic helix-loop-helix protein 112</fullName>
        <shortName>AtbHLH112</shortName>
        <shortName>bHLH 112</shortName>
    </alternativeName>
    <alternativeName>
        <fullName>Transcription factor EN 64</fullName>
    </alternativeName>
    <alternativeName>
        <fullName>bHLH transcription factor bHLH112</fullName>
    </alternativeName>
</protein>
<sequence length="393" mass="43041">MAEEFKATASICGGGGGAWWNSPRSVMSPSDHFLSPCFGAAITSNDFSSQENHLKSRMTCTDNNNIVFGQREADSDSGGSTVTMDSTLQMMGLGFSSNCSSDWNQTILQEDLNSSFIRSSQDQDHGQGFLSTTTSPYILNPACSSSPSTSSSSSLIRTFYDPEPSPYNFVSTTSGSINDPQLSWANKTNPHHQVAYGLINSFSNNANSRPFWNSSSTTNLNNTTPSNFVTTPQIISTRLEDKTKNLKTRAQSESLKRAKDNESAAKKPRVTTPSPLPTFKVRKENLRDQITSLQQLVSPFGKTDTASVLQEAIEYIKFLHDQVTVLSTPYMKQGASNQQQQQISGKSKSQDENENHELRGHGLCLVPISSTFPVANETTADFWTPTFGGNNFR</sequence>
<name>BH112_ARATH</name>
<reference key="1">
    <citation type="journal article" date="2000" name="Nature">
        <title>Sequence and analysis of chromosome 1 of the plant Arabidopsis thaliana.</title>
        <authorList>
            <person name="Theologis A."/>
            <person name="Ecker J.R."/>
            <person name="Palm C.J."/>
            <person name="Federspiel N.A."/>
            <person name="Kaul S."/>
            <person name="White O."/>
            <person name="Alonso J."/>
            <person name="Altafi H."/>
            <person name="Araujo R."/>
            <person name="Bowman C.L."/>
            <person name="Brooks S.Y."/>
            <person name="Buehler E."/>
            <person name="Chan A."/>
            <person name="Chao Q."/>
            <person name="Chen H."/>
            <person name="Cheuk R.F."/>
            <person name="Chin C.W."/>
            <person name="Chung M.K."/>
            <person name="Conn L."/>
            <person name="Conway A.B."/>
            <person name="Conway A.R."/>
            <person name="Creasy T.H."/>
            <person name="Dewar K."/>
            <person name="Dunn P."/>
            <person name="Etgu P."/>
            <person name="Feldblyum T.V."/>
            <person name="Feng J.-D."/>
            <person name="Fong B."/>
            <person name="Fujii C.Y."/>
            <person name="Gill J.E."/>
            <person name="Goldsmith A.D."/>
            <person name="Haas B."/>
            <person name="Hansen N.F."/>
            <person name="Hughes B."/>
            <person name="Huizar L."/>
            <person name="Hunter J.L."/>
            <person name="Jenkins J."/>
            <person name="Johnson-Hopson C."/>
            <person name="Khan S."/>
            <person name="Khaykin E."/>
            <person name="Kim C.J."/>
            <person name="Koo H.L."/>
            <person name="Kremenetskaia I."/>
            <person name="Kurtz D.B."/>
            <person name="Kwan A."/>
            <person name="Lam B."/>
            <person name="Langin-Hooper S."/>
            <person name="Lee A."/>
            <person name="Lee J.M."/>
            <person name="Lenz C.A."/>
            <person name="Li J.H."/>
            <person name="Li Y.-P."/>
            <person name="Lin X."/>
            <person name="Liu S.X."/>
            <person name="Liu Z.A."/>
            <person name="Luros J.S."/>
            <person name="Maiti R."/>
            <person name="Marziali A."/>
            <person name="Militscher J."/>
            <person name="Miranda M."/>
            <person name="Nguyen M."/>
            <person name="Nierman W.C."/>
            <person name="Osborne B.I."/>
            <person name="Pai G."/>
            <person name="Peterson J."/>
            <person name="Pham P.K."/>
            <person name="Rizzo M."/>
            <person name="Rooney T."/>
            <person name="Rowley D."/>
            <person name="Sakano H."/>
            <person name="Salzberg S.L."/>
            <person name="Schwartz J.R."/>
            <person name="Shinn P."/>
            <person name="Southwick A.M."/>
            <person name="Sun H."/>
            <person name="Tallon L.J."/>
            <person name="Tambunga G."/>
            <person name="Toriumi M.J."/>
            <person name="Town C.D."/>
            <person name="Utterback T."/>
            <person name="Van Aken S."/>
            <person name="Vaysberg M."/>
            <person name="Vysotskaia V.S."/>
            <person name="Walker M."/>
            <person name="Wu D."/>
            <person name="Yu G."/>
            <person name="Fraser C.M."/>
            <person name="Venter J.C."/>
            <person name="Davis R.W."/>
        </authorList>
    </citation>
    <scope>NUCLEOTIDE SEQUENCE [LARGE SCALE GENOMIC DNA]</scope>
    <source>
        <strain>cv. Columbia</strain>
    </source>
</reference>
<reference key="2">
    <citation type="journal article" date="2017" name="Plant J.">
        <title>Araport11: a complete reannotation of the Arabidopsis thaliana reference genome.</title>
        <authorList>
            <person name="Cheng C.Y."/>
            <person name="Krishnakumar V."/>
            <person name="Chan A.P."/>
            <person name="Thibaud-Nissen F."/>
            <person name="Schobel S."/>
            <person name="Town C.D."/>
        </authorList>
    </citation>
    <scope>GENOME REANNOTATION</scope>
    <source>
        <strain>cv. Columbia</strain>
    </source>
</reference>
<reference key="3">
    <citation type="journal article" date="2003" name="Science">
        <title>Empirical analysis of transcriptional activity in the Arabidopsis genome.</title>
        <authorList>
            <person name="Yamada K."/>
            <person name="Lim J."/>
            <person name="Dale J.M."/>
            <person name="Chen H."/>
            <person name="Shinn P."/>
            <person name="Palm C.J."/>
            <person name="Southwick A.M."/>
            <person name="Wu H.C."/>
            <person name="Kim C.J."/>
            <person name="Nguyen M."/>
            <person name="Pham P.K."/>
            <person name="Cheuk R.F."/>
            <person name="Karlin-Newmann G."/>
            <person name="Liu S.X."/>
            <person name="Lam B."/>
            <person name="Sakano H."/>
            <person name="Wu T."/>
            <person name="Yu G."/>
            <person name="Miranda M."/>
            <person name="Quach H.L."/>
            <person name="Tripp M."/>
            <person name="Chang C.H."/>
            <person name="Lee J.M."/>
            <person name="Toriumi M.J."/>
            <person name="Chan M.M."/>
            <person name="Tang C.C."/>
            <person name="Onodera C.S."/>
            <person name="Deng J.M."/>
            <person name="Akiyama K."/>
            <person name="Ansari Y."/>
            <person name="Arakawa T."/>
            <person name="Banh J."/>
            <person name="Banno F."/>
            <person name="Bowser L."/>
            <person name="Brooks S.Y."/>
            <person name="Carninci P."/>
            <person name="Chao Q."/>
            <person name="Choy N."/>
            <person name="Enju A."/>
            <person name="Goldsmith A.D."/>
            <person name="Gurjal M."/>
            <person name="Hansen N.F."/>
            <person name="Hayashizaki Y."/>
            <person name="Johnson-Hopson C."/>
            <person name="Hsuan V.W."/>
            <person name="Iida K."/>
            <person name="Karnes M."/>
            <person name="Khan S."/>
            <person name="Koesema E."/>
            <person name="Ishida J."/>
            <person name="Jiang P.X."/>
            <person name="Jones T."/>
            <person name="Kawai J."/>
            <person name="Kamiya A."/>
            <person name="Meyers C."/>
            <person name="Nakajima M."/>
            <person name="Narusaka M."/>
            <person name="Seki M."/>
            <person name="Sakurai T."/>
            <person name="Satou M."/>
            <person name="Tamse R."/>
            <person name="Vaysberg M."/>
            <person name="Wallender E.K."/>
            <person name="Wong C."/>
            <person name="Yamamura Y."/>
            <person name="Yuan S."/>
            <person name="Shinozaki K."/>
            <person name="Davis R.W."/>
            <person name="Theologis A."/>
            <person name="Ecker J.R."/>
        </authorList>
    </citation>
    <scope>NUCLEOTIDE SEQUENCE [LARGE SCALE MRNA] (ISOFORM 1)</scope>
    <source>
        <strain>cv. Columbia</strain>
    </source>
</reference>
<reference key="4">
    <citation type="submission" date="2002-03" db="EMBL/GenBank/DDBJ databases">
        <title>Full-length cDNA from Arabidopsis thaliana.</title>
        <authorList>
            <person name="Brover V.V."/>
            <person name="Troukhan M.E."/>
            <person name="Alexandrov N.A."/>
            <person name="Lu Y.-P."/>
            <person name="Flavell R.B."/>
            <person name="Feldmann K.A."/>
        </authorList>
    </citation>
    <scope>NUCLEOTIDE SEQUENCE [LARGE SCALE MRNA] (ISOFORM 1)</scope>
</reference>
<reference key="5">
    <citation type="journal article" date="2003" name="Mol. Biol. Evol.">
        <title>The basic helix-loop-helix transcription factor family in plants: a genome-wide study of protein structure and functional diversity.</title>
        <authorList>
            <person name="Heim M.A."/>
            <person name="Jakoby M."/>
            <person name="Werber M."/>
            <person name="Martin C."/>
            <person name="Weisshaar B."/>
            <person name="Bailey P.C."/>
        </authorList>
    </citation>
    <scope>NUCLEOTIDE SEQUENCE [MRNA] OF 275-347 (ISOFORM 2)</scope>
    <scope>GENE FAMILY</scope>
    <scope>NOMENCLATURE</scope>
    <source>
        <strain>cv. Columbia</strain>
    </source>
</reference>
<reference key="6">
    <citation type="journal article" date="2003" name="Plant Cell">
        <title>The Arabidopsis basic/helix-loop-helix transcription factor family.</title>
        <authorList>
            <person name="Toledo-Ortiz G."/>
            <person name="Huq E."/>
            <person name="Quail P.H."/>
        </authorList>
    </citation>
    <scope>GENE FAMILY</scope>
</reference>
<reference key="7">
    <citation type="journal article" date="2003" name="Plant Cell">
        <title>Update on the basic helix-loop-helix transcription factor gene family in Arabidopsis thaliana.</title>
        <authorList>
            <person name="Bailey P.C."/>
            <person name="Martin C."/>
            <person name="Toledo-Ortiz G."/>
            <person name="Quail P.H."/>
            <person name="Huq E."/>
            <person name="Heim M.A."/>
            <person name="Jakoby M."/>
            <person name="Werber M."/>
            <person name="Weisshaar B."/>
        </authorList>
    </citation>
    <scope>GENE FAMILY</scope>
    <scope>NOMENCLATURE</scope>
</reference>
<dbReference type="EMBL" id="AC005882">
    <property type="protein sequence ID" value="AAD21412.1"/>
    <property type="status" value="ALT_SEQ"/>
    <property type="molecule type" value="Genomic_DNA"/>
</dbReference>
<dbReference type="EMBL" id="CP002684">
    <property type="protein sequence ID" value="AEE33867.1"/>
    <property type="molecule type" value="Genomic_DNA"/>
</dbReference>
<dbReference type="EMBL" id="CP002684">
    <property type="protein sequence ID" value="AEE33868.1"/>
    <property type="molecule type" value="Genomic_DNA"/>
</dbReference>
<dbReference type="EMBL" id="CP002684">
    <property type="protein sequence ID" value="ANM60596.1"/>
    <property type="molecule type" value="Genomic_DNA"/>
</dbReference>
<dbReference type="EMBL" id="CP002684">
    <property type="protein sequence ID" value="ANM60597.1"/>
    <property type="molecule type" value="Genomic_DNA"/>
</dbReference>
<dbReference type="EMBL" id="AF380649">
    <property type="protein sequence ID" value="AAK55730.1"/>
    <property type="molecule type" value="mRNA"/>
</dbReference>
<dbReference type="EMBL" id="AY113072">
    <property type="protein sequence ID" value="AAM47380.1"/>
    <property type="molecule type" value="mRNA"/>
</dbReference>
<dbReference type="EMBL" id="AY085602">
    <property type="protein sequence ID" value="AAM62823.1"/>
    <property type="molecule type" value="mRNA"/>
</dbReference>
<dbReference type="EMBL" id="AF488630">
    <property type="status" value="NOT_ANNOTATED_CDS"/>
    <property type="molecule type" value="mRNA"/>
</dbReference>
<dbReference type="PIR" id="A96642">
    <property type="entry name" value="A96642"/>
</dbReference>
<dbReference type="RefSeq" id="NP_001322872.1">
    <molecule id="Q94JL3-1"/>
    <property type="nucleotide sequence ID" value="NM_001333997.1"/>
</dbReference>
<dbReference type="RefSeq" id="NP_001322873.1">
    <molecule id="Q94JL3-2"/>
    <property type="nucleotide sequence ID" value="NM_001333996.1"/>
</dbReference>
<dbReference type="RefSeq" id="NP_564782.1">
    <molecule id="Q94JL3-1"/>
    <property type="nucleotide sequence ID" value="NM_104847.4"/>
</dbReference>
<dbReference type="RefSeq" id="NP_849836.1">
    <molecule id="Q94JL3-2"/>
    <property type="nucleotide sequence ID" value="NM_179505.1"/>
</dbReference>
<dbReference type="BioGRID" id="27685">
    <property type="interactions" value="46"/>
</dbReference>
<dbReference type="FunCoup" id="Q94JL3">
    <property type="interactions" value="238"/>
</dbReference>
<dbReference type="IntAct" id="Q94JL3">
    <property type="interactions" value="44"/>
</dbReference>
<dbReference type="STRING" id="3702.Q94JL3"/>
<dbReference type="PaxDb" id="3702-AT1G61660.1"/>
<dbReference type="EnsemblPlants" id="AT1G61660.1">
    <molecule id="Q94JL3-1"/>
    <property type="protein sequence ID" value="AT1G61660.1"/>
    <property type="gene ID" value="AT1G61660"/>
</dbReference>
<dbReference type="EnsemblPlants" id="AT1G61660.2">
    <molecule id="Q94JL3-2"/>
    <property type="protein sequence ID" value="AT1G61660.2"/>
    <property type="gene ID" value="AT1G61660"/>
</dbReference>
<dbReference type="EnsemblPlants" id="AT1G61660.6">
    <molecule id="Q94JL3-2"/>
    <property type="protein sequence ID" value="AT1G61660.6"/>
    <property type="gene ID" value="AT1G61660"/>
</dbReference>
<dbReference type="EnsemblPlants" id="AT1G61660.7">
    <molecule id="Q94JL3-1"/>
    <property type="protein sequence ID" value="AT1G61660.7"/>
    <property type="gene ID" value="AT1G61660"/>
</dbReference>
<dbReference type="GeneID" id="842462"/>
<dbReference type="Gramene" id="AT1G61660.1">
    <molecule id="Q94JL3-1"/>
    <property type="protein sequence ID" value="AT1G61660.1"/>
    <property type="gene ID" value="AT1G61660"/>
</dbReference>
<dbReference type="Gramene" id="AT1G61660.2">
    <molecule id="Q94JL3-2"/>
    <property type="protein sequence ID" value="AT1G61660.2"/>
    <property type="gene ID" value="AT1G61660"/>
</dbReference>
<dbReference type="Gramene" id="AT1G61660.6">
    <molecule id="Q94JL3-2"/>
    <property type="protein sequence ID" value="AT1G61660.6"/>
    <property type="gene ID" value="AT1G61660"/>
</dbReference>
<dbReference type="Gramene" id="AT1G61660.7">
    <molecule id="Q94JL3-1"/>
    <property type="protein sequence ID" value="AT1G61660.7"/>
    <property type="gene ID" value="AT1G61660"/>
</dbReference>
<dbReference type="KEGG" id="ath:AT1G61660"/>
<dbReference type="Araport" id="AT1G61660"/>
<dbReference type="TAIR" id="AT1G61660">
    <property type="gene designation" value="ATBHLH112"/>
</dbReference>
<dbReference type="eggNOG" id="ENOG502QRNH">
    <property type="taxonomic scope" value="Eukaryota"/>
</dbReference>
<dbReference type="InParanoid" id="Q94JL3"/>
<dbReference type="OrthoDB" id="673975at2759"/>
<dbReference type="PhylomeDB" id="Q94JL3"/>
<dbReference type="PRO" id="PR:Q94JL3"/>
<dbReference type="Proteomes" id="UP000006548">
    <property type="component" value="Chromosome 1"/>
</dbReference>
<dbReference type="ExpressionAtlas" id="Q94JL3">
    <property type="expression patterns" value="baseline and differential"/>
</dbReference>
<dbReference type="GO" id="GO:0005634">
    <property type="term" value="C:nucleus"/>
    <property type="evidence" value="ECO:0000314"/>
    <property type="project" value="TAIR"/>
</dbReference>
<dbReference type="GO" id="GO:0003700">
    <property type="term" value="F:DNA-binding transcription factor activity"/>
    <property type="evidence" value="ECO:0000250"/>
    <property type="project" value="TAIR"/>
</dbReference>
<dbReference type="GO" id="GO:0046983">
    <property type="term" value="F:protein dimerization activity"/>
    <property type="evidence" value="ECO:0007669"/>
    <property type="project" value="InterPro"/>
</dbReference>
<dbReference type="GO" id="GO:0000978">
    <property type="term" value="F:RNA polymerase II cis-regulatory region sequence-specific DNA binding"/>
    <property type="evidence" value="ECO:0000314"/>
    <property type="project" value="TAIR"/>
</dbReference>
<dbReference type="GO" id="GO:0043565">
    <property type="term" value="F:sequence-specific DNA binding"/>
    <property type="evidence" value="ECO:0000314"/>
    <property type="project" value="TAIR"/>
</dbReference>
<dbReference type="GO" id="GO:0071215">
    <property type="term" value="P:cellular response to abscisic acid stimulus"/>
    <property type="evidence" value="ECO:0000270"/>
    <property type="project" value="TAIR"/>
</dbReference>
<dbReference type="GO" id="GO:0071472">
    <property type="term" value="P:cellular response to salt stress"/>
    <property type="evidence" value="ECO:0000270"/>
    <property type="project" value="TAIR"/>
</dbReference>
<dbReference type="GO" id="GO:0042631">
    <property type="term" value="P:cellular response to water deprivation"/>
    <property type="evidence" value="ECO:0000270"/>
    <property type="project" value="TAIR"/>
</dbReference>
<dbReference type="GO" id="GO:0045893">
    <property type="term" value="P:positive regulation of DNA-templated transcription"/>
    <property type="evidence" value="ECO:0000314"/>
    <property type="project" value="TAIR"/>
</dbReference>
<dbReference type="GO" id="GO:2000214">
    <property type="term" value="P:regulation of proline metabolic process"/>
    <property type="evidence" value="ECO:0000315"/>
    <property type="project" value="TAIR"/>
</dbReference>
<dbReference type="GO" id="GO:2000377">
    <property type="term" value="P:regulation of reactive oxygen species metabolic process"/>
    <property type="evidence" value="ECO:0000315"/>
    <property type="project" value="TAIR"/>
</dbReference>
<dbReference type="CDD" id="cd11393">
    <property type="entry name" value="bHLH_AtbHLH_like"/>
    <property type="match status" value="1"/>
</dbReference>
<dbReference type="FunFam" id="4.10.280.10:FF:000075">
    <property type="entry name" value="Transcription factor bHLH113 family"/>
    <property type="match status" value="1"/>
</dbReference>
<dbReference type="Gene3D" id="4.10.280.10">
    <property type="entry name" value="Helix-loop-helix DNA-binding domain"/>
    <property type="match status" value="1"/>
</dbReference>
<dbReference type="InterPro" id="IPR045239">
    <property type="entry name" value="bHLH95_bHLH"/>
</dbReference>
<dbReference type="InterPro" id="IPR011598">
    <property type="entry name" value="bHLH_dom"/>
</dbReference>
<dbReference type="InterPro" id="IPR036638">
    <property type="entry name" value="HLH_DNA-bd_sf"/>
</dbReference>
<dbReference type="InterPro" id="IPR045843">
    <property type="entry name" value="IND-like"/>
</dbReference>
<dbReference type="PANTHER" id="PTHR16223:SF288">
    <property type="entry name" value="TRANSCRIPTION FACTOR BHLH112"/>
    <property type="match status" value="1"/>
</dbReference>
<dbReference type="PANTHER" id="PTHR16223">
    <property type="entry name" value="TRANSCRIPTION FACTOR BHLH83-RELATED"/>
    <property type="match status" value="1"/>
</dbReference>
<dbReference type="Pfam" id="PF00010">
    <property type="entry name" value="HLH"/>
    <property type="match status" value="1"/>
</dbReference>
<dbReference type="SMART" id="SM00353">
    <property type="entry name" value="HLH"/>
    <property type="match status" value="1"/>
</dbReference>
<dbReference type="SUPFAM" id="SSF47459">
    <property type="entry name" value="HLH, helix-loop-helix DNA-binding domain"/>
    <property type="match status" value="1"/>
</dbReference>
<dbReference type="PROSITE" id="PS50888">
    <property type="entry name" value="BHLH"/>
    <property type="match status" value="1"/>
</dbReference>
<comment type="subunit">
    <text evidence="4">Homodimer.</text>
</comment>
<comment type="interaction">
    <interactant intactId="EBI-3133192">
        <id>Q94JL3</id>
    </interactant>
    <interactant intactId="EBI-1536772">
        <id>O04292</id>
        <label>ATHB-9</label>
    </interactant>
    <organismsDiffer>false</organismsDiffer>
    <experiments>3</experiments>
</comment>
<comment type="interaction">
    <interactant intactId="EBI-3133192">
        <id>Q94JL3</id>
    </interactant>
    <interactant intactId="EBI-15195499">
        <id>Q9M128</id>
        <label>BHLH57</label>
    </interactant>
    <organismsDiffer>false</organismsDiffer>
    <experiments>3</experiments>
</comment>
<comment type="interaction">
    <interactant intactId="EBI-3133192">
        <id>Q94JL3</id>
    </interactant>
    <interactant intactId="EBI-4442198">
        <id>Q93Y00</id>
        <label>BHLH7</label>
    </interactant>
    <organismsDiffer>false</organismsDiffer>
    <experiments>3</experiments>
</comment>
<comment type="subcellular location">
    <subcellularLocation>
        <location evidence="1">Nucleus</location>
    </subcellularLocation>
</comment>
<comment type="alternative products">
    <event type="alternative splicing"/>
    <isoform>
        <id>Q94JL3-1</id>
        <name>1</name>
        <sequence type="displayed"/>
    </isoform>
    <isoform>
        <id>Q94JL3-2</id>
        <name>2</name>
        <sequence type="described" ref="VSP_036101 VSP_036102"/>
    </isoform>
</comment>
<comment type="miscellaneous">
    <molecule>Isoform 2</molecule>
    <text evidence="4">May be due to an intron retention.</text>
</comment>
<comment type="sequence caution" evidence="4">
    <conflict type="erroneous gene model prediction">
        <sequence resource="EMBL-CDS" id="AAD21412"/>
    </conflict>
</comment>
<evidence type="ECO:0000255" key="1">
    <source>
        <dbReference type="PROSITE-ProRule" id="PRU00981"/>
    </source>
</evidence>
<evidence type="ECO:0000256" key="2">
    <source>
        <dbReference type="SAM" id="MobiDB-lite"/>
    </source>
</evidence>
<evidence type="ECO:0000303" key="3">
    <source>
    </source>
</evidence>
<evidence type="ECO:0000305" key="4"/>
<accession>Q94JL3</accession>
<accession>Q3ECK8</accession>
<accession>Q8LE61</accession>
<accession>Q9SYA1</accession>
<organism>
    <name type="scientific">Arabidopsis thaliana</name>
    <name type="common">Mouse-ear cress</name>
    <dbReference type="NCBI Taxonomy" id="3702"/>
    <lineage>
        <taxon>Eukaryota</taxon>
        <taxon>Viridiplantae</taxon>
        <taxon>Streptophyta</taxon>
        <taxon>Embryophyta</taxon>
        <taxon>Tracheophyta</taxon>
        <taxon>Spermatophyta</taxon>
        <taxon>Magnoliopsida</taxon>
        <taxon>eudicotyledons</taxon>
        <taxon>Gunneridae</taxon>
        <taxon>Pentapetalae</taxon>
        <taxon>rosids</taxon>
        <taxon>malvids</taxon>
        <taxon>Brassicales</taxon>
        <taxon>Brassicaceae</taxon>
        <taxon>Camelineae</taxon>
        <taxon>Arabidopsis</taxon>
    </lineage>
</organism>
<proteinExistence type="evidence at protein level"/>